<protein>
    <recommendedName>
        <fullName>Porphobilinogen deaminase</fullName>
        <shortName>PBG</shortName>
        <ecNumber>2.5.1.61</ecNumber>
    </recommendedName>
    <alternativeName>
        <fullName>Hydroxymethylbilane synthase</fullName>
        <shortName>HMBS</shortName>
    </alternativeName>
    <alternativeName>
        <fullName>Pre-uroporphyrinogen synthase</fullName>
    </alternativeName>
</protein>
<proteinExistence type="inferred from homology"/>
<name>HEM3_MYCBO</name>
<dbReference type="EC" id="2.5.1.61"/>
<dbReference type="EMBL" id="LT708304">
    <property type="protein sequence ID" value="SIT99118.1"/>
    <property type="molecule type" value="Genomic_DNA"/>
</dbReference>
<dbReference type="RefSeq" id="NP_854185.1">
    <property type="nucleotide sequence ID" value="NC_002945.3"/>
</dbReference>
<dbReference type="RefSeq" id="WP_003402702.1">
    <property type="nucleotide sequence ID" value="NC_002945.4"/>
</dbReference>
<dbReference type="SMR" id="P64337"/>
<dbReference type="PATRIC" id="fig|233413.5.peg.569"/>
<dbReference type="UniPathway" id="UPA00251">
    <property type="reaction ID" value="UER00319"/>
</dbReference>
<dbReference type="Proteomes" id="UP000001419">
    <property type="component" value="Chromosome"/>
</dbReference>
<dbReference type="GO" id="GO:0005737">
    <property type="term" value="C:cytoplasm"/>
    <property type="evidence" value="ECO:0007669"/>
    <property type="project" value="TreeGrafter"/>
</dbReference>
<dbReference type="GO" id="GO:0004418">
    <property type="term" value="F:hydroxymethylbilane synthase activity"/>
    <property type="evidence" value="ECO:0007669"/>
    <property type="project" value="UniProtKB-UniRule"/>
</dbReference>
<dbReference type="GO" id="GO:0006782">
    <property type="term" value="P:protoporphyrinogen IX biosynthetic process"/>
    <property type="evidence" value="ECO:0007669"/>
    <property type="project" value="UniProtKB-UniRule"/>
</dbReference>
<dbReference type="CDD" id="cd13646">
    <property type="entry name" value="PBP2_EcHMBS_like"/>
    <property type="match status" value="1"/>
</dbReference>
<dbReference type="FunFam" id="3.30.160.40:FF:000001">
    <property type="entry name" value="Porphobilinogen deaminase"/>
    <property type="match status" value="1"/>
</dbReference>
<dbReference type="FunFam" id="3.40.190.10:FF:000005">
    <property type="entry name" value="Porphobilinogen deaminase"/>
    <property type="match status" value="1"/>
</dbReference>
<dbReference type="Gene3D" id="3.40.190.10">
    <property type="entry name" value="Periplasmic binding protein-like II"/>
    <property type="match status" value="2"/>
</dbReference>
<dbReference type="Gene3D" id="3.30.160.40">
    <property type="entry name" value="Porphobilinogen deaminase, C-terminal domain"/>
    <property type="match status" value="1"/>
</dbReference>
<dbReference type="HAMAP" id="MF_00260">
    <property type="entry name" value="Porphobil_deam"/>
    <property type="match status" value="1"/>
</dbReference>
<dbReference type="InterPro" id="IPR000860">
    <property type="entry name" value="HemC"/>
</dbReference>
<dbReference type="InterPro" id="IPR022419">
    <property type="entry name" value="Porphobilin_deaminase_cofac_BS"/>
</dbReference>
<dbReference type="InterPro" id="IPR022417">
    <property type="entry name" value="Porphobilin_deaminase_N"/>
</dbReference>
<dbReference type="InterPro" id="IPR022418">
    <property type="entry name" value="Porphobilinogen_deaminase_C"/>
</dbReference>
<dbReference type="InterPro" id="IPR036803">
    <property type="entry name" value="Porphobilinogen_deaminase_C_sf"/>
</dbReference>
<dbReference type="NCBIfam" id="TIGR00212">
    <property type="entry name" value="hemC"/>
    <property type="match status" value="1"/>
</dbReference>
<dbReference type="PANTHER" id="PTHR11557">
    <property type="entry name" value="PORPHOBILINOGEN DEAMINASE"/>
    <property type="match status" value="1"/>
</dbReference>
<dbReference type="PANTHER" id="PTHR11557:SF0">
    <property type="entry name" value="PORPHOBILINOGEN DEAMINASE"/>
    <property type="match status" value="1"/>
</dbReference>
<dbReference type="Pfam" id="PF01379">
    <property type="entry name" value="Porphobil_deam"/>
    <property type="match status" value="1"/>
</dbReference>
<dbReference type="Pfam" id="PF03900">
    <property type="entry name" value="Porphobil_deamC"/>
    <property type="match status" value="1"/>
</dbReference>
<dbReference type="PIRSF" id="PIRSF001438">
    <property type="entry name" value="4pyrrol_synth_OHMeBilane_synth"/>
    <property type="match status" value="1"/>
</dbReference>
<dbReference type="PRINTS" id="PR00151">
    <property type="entry name" value="PORPHBDMNASE"/>
</dbReference>
<dbReference type="SUPFAM" id="SSF53850">
    <property type="entry name" value="Periplasmic binding protein-like II"/>
    <property type="match status" value="1"/>
</dbReference>
<dbReference type="SUPFAM" id="SSF54782">
    <property type="entry name" value="Porphobilinogen deaminase (hydroxymethylbilane synthase), C-terminal domain"/>
    <property type="match status" value="1"/>
</dbReference>
<dbReference type="PROSITE" id="PS00533">
    <property type="entry name" value="PORPHOBILINOGEN_DEAM"/>
    <property type="match status" value="1"/>
</dbReference>
<keyword id="KW-0627">Porphyrin biosynthesis</keyword>
<keyword id="KW-1185">Reference proteome</keyword>
<keyword id="KW-0808">Transferase</keyword>
<reference key="1">
    <citation type="journal article" date="2003" name="Proc. Natl. Acad. Sci. U.S.A.">
        <title>The complete genome sequence of Mycobacterium bovis.</title>
        <authorList>
            <person name="Garnier T."/>
            <person name="Eiglmeier K."/>
            <person name="Camus J.-C."/>
            <person name="Medina N."/>
            <person name="Mansoor H."/>
            <person name="Pryor M."/>
            <person name="Duthoy S."/>
            <person name="Grondin S."/>
            <person name="Lacroix C."/>
            <person name="Monsempe C."/>
            <person name="Simon S."/>
            <person name="Harris B."/>
            <person name="Atkin R."/>
            <person name="Doggett J."/>
            <person name="Mayes R."/>
            <person name="Keating L."/>
            <person name="Wheeler P.R."/>
            <person name="Parkhill J."/>
            <person name="Barrell B.G."/>
            <person name="Cole S.T."/>
            <person name="Gordon S.V."/>
            <person name="Hewinson R.G."/>
        </authorList>
    </citation>
    <scope>NUCLEOTIDE SEQUENCE [LARGE SCALE GENOMIC DNA]</scope>
    <source>
        <strain>ATCC BAA-935 / AF2122/97</strain>
    </source>
</reference>
<reference key="2">
    <citation type="journal article" date="2017" name="Genome Announc.">
        <title>Updated reference genome sequence and annotation of Mycobacterium bovis AF2122/97.</title>
        <authorList>
            <person name="Malone K.M."/>
            <person name="Farrell D."/>
            <person name="Stuber T.P."/>
            <person name="Schubert O.T."/>
            <person name="Aebersold R."/>
            <person name="Robbe-Austerman S."/>
            <person name="Gordon S.V."/>
        </authorList>
    </citation>
    <scope>NUCLEOTIDE SEQUENCE [LARGE SCALE GENOMIC DNA]</scope>
    <scope>GENOME REANNOTATION</scope>
    <source>
        <strain>ATCC BAA-935 / AF2122/97</strain>
    </source>
</reference>
<sequence length="309" mass="31938">MIRIGTRGSLLATTQAATVRDALIAGGHSAELVTISTEGDRSMAPIASLGVGVFTTALREAMEAGLVDAAVHSYKDLPTAADPRFTVAAIPPRNDPRDAVVARDGLTLGELPVGSLVGTSSPRRAAQLRALGLGLEIRPLRGNLDTRLNKVSSGDLDAIVVARAGLARLGRLDDVTETLEPVQMLPAPAQGALAVECRAGDSRLVAVLAELDDADTRAAVTAERALLADLEAGCSAPVGAIAEVVESIDEDGRVFEELSLRGCVAALDGSDVIRASGIGSCGRARELGLSVAAELFELGARELMWGVRH</sequence>
<feature type="chain" id="PRO_0000142957" description="Porphobilinogen deaminase">
    <location>
        <begin position="1"/>
        <end position="309"/>
    </location>
</feature>
<feature type="modified residue" description="S-(dipyrrolylmethanemethyl)cysteine" evidence="1">
    <location>
        <position position="234"/>
    </location>
</feature>
<comment type="function">
    <text evidence="1">Tetrapolymerization of the monopyrrole PBG into the hydroxymethylbilane pre-uroporphyrinogen in several discrete steps.</text>
</comment>
<comment type="catalytic activity">
    <reaction>
        <text>4 porphobilinogen + H2O = hydroxymethylbilane + 4 NH4(+)</text>
        <dbReference type="Rhea" id="RHEA:13185"/>
        <dbReference type="ChEBI" id="CHEBI:15377"/>
        <dbReference type="ChEBI" id="CHEBI:28938"/>
        <dbReference type="ChEBI" id="CHEBI:57845"/>
        <dbReference type="ChEBI" id="CHEBI:58126"/>
        <dbReference type="EC" id="2.5.1.61"/>
    </reaction>
</comment>
<comment type="cofactor">
    <cofactor evidence="1">
        <name>dipyrromethane</name>
        <dbReference type="ChEBI" id="CHEBI:60342"/>
    </cofactor>
    <text evidence="1">Binds 1 dipyrromethane group covalently.</text>
</comment>
<comment type="pathway">
    <text>Porphyrin-containing compound metabolism; protoporphyrin-IX biosynthesis; coproporphyrinogen-III from 5-aminolevulinate: step 2/4.</text>
</comment>
<comment type="subunit">
    <text evidence="1">Monomer.</text>
</comment>
<comment type="miscellaneous">
    <text evidence="1">The porphobilinogen subunits are added to the dipyrromethane group.</text>
</comment>
<comment type="similarity">
    <text evidence="2">Belongs to the HMBS family.</text>
</comment>
<evidence type="ECO:0000250" key="1"/>
<evidence type="ECO:0000305" key="2"/>
<gene>
    <name type="primary">hemC</name>
    <name type="ordered locus">BQ2027_MB0523</name>
</gene>
<accession>P64337</accession>
<accession>A0A1R3XVJ2</accession>
<accession>Q11173</accession>
<accession>X2BF64</accession>
<organism>
    <name type="scientific">Mycobacterium bovis (strain ATCC BAA-935 / AF2122/97)</name>
    <dbReference type="NCBI Taxonomy" id="233413"/>
    <lineage>
        <taxon>Bacteria</taxon>
        <taxon>Bacillati</taxon>
        <taxon>Actinomycetota</taxon>
        <taxon>Actinomycetes</taxon>
        <taxon>Mycobacteriales</taxon>
        <taxon>Mycobacteriaceae</taxon>
        <taxon>Mycobacterium</taxon>
        <taxon>Mycobacterium tuberculosis complex</taxon>
    </lineage>
</organism>